<proteinExistence type="inferred from homology"/>
<dbReference type="EMBL" id="AP006627">
    <property type="protein sequence ID" value="BAD64130.1"/>
    <property type="molecule type" value="Genomic_DNA"/>
</dbReference>
<dbReference type="RefSeq" id="WP_011246439.1">
    <property type="nucleotide sequence ID" value="NC_006582.1"/>
</dbReference>
<dbReference type="STRING" id="66692.ABC1595"/>
<dbReference type="KEGG" id="bcl:ABC1595"/>
<dbReference type="eggNOG" id="COG3906">
    <property type="taxonomic scope" value="Bacteria"/>
</dbReference>
<dbReference type="HOGENOM" id="CLU_146610_2_1_9"/>
<dbReference type="OrthoDB" id="2086132at2"/>
<dbReference type="Proteomes" id="UP000001168">
    <property type="component" value="Chromosome"/>
</dbReference>
<dbReference type="HAMAP" id="MF_01448">
    <property type="entry name" value="UPF0473"/>
    <property type="match status" value="1"/>
</dbReference>
<dbReference type="InterPro" id="IPR009711">
    <property type="entry name" value="UPF0473"/>
</dbReference>
<dbReference type="NCBIfam" id="NF010222">
    <property type="entry name" value="PRK13678.2-5"/>
    <property type="match status" value="1"/>
</dbReference>
<dbReference type="PANTHER" id="PTHR40066">
    <property type="entry name" value="UPF0473 PROTEIN CBO2561/CLC_2432"/>
    <property type="match status" value="1"/>
</dbReference>
<dbReference type="PANTHER" id="PTHR40066:SF1">
    <property type="entry name" value="UPF0473 PROTEIN CBO2561_CLC_2432"/>
    <property type="match status" value="1"/>
</dbReference>
<dbReference type="Pfam" id="PF06949">
    <property type="entry name" value="DUF1292"/>
    <property type="match status" value="1"/>
</dbReference>
<keyword id="KW-1185">Reference proteome</keyword>
<name>Y1595_SHOC1</name>
<evidence type="ECO:0000255" key="1">
    <source>
        <dbReference type="HAMAP-Rule" id="MF_01448"/>
    </source>
</evidence>
<protein>
    <recommendedName>
        <fullName evidence="1">UPF0473 protein ABC1595</fullName>
    </recommendedName>
</protein>
<reference key="1">
    <citation type="submission" date="2003-10" db="EMBL/GenBank/DDBJ databases">
        <title>The complete genome sequence of the alkaliphilic Bacillus clausii KSM-K16.</title>
        <authorList>
            <person name="Takaki Y."/>
            <person name="Kageyama Y."/>
            <person name="Shimamura S."/>
            <person name="Suzuki H."/>
            <person name="Nishi S."/>
            <person name="Hatada Y."/>
            <person name="Kawai S."/>
            <person name="Ito S."/>
            <person name="Horikoshi K."/>
        </authorList>
    </citation>
    <scope>NUCLEOTIDE SEQUENCE [LARGE SCALE GENOMIC DNA]</scope>
    <source>
        <strain>KSM-K16</strain>
    </source>
</reference>
<feature type="chain" id="PRO_0000304816" description="UPF0473 protein ABC1595">
    <location>
        <begin position="1"/>
        <end position="95"/>
    </location>
</feature>
<accession>Q5WHM5</accession>
<gene>
    <name type="ordered locus">ABC1595</name>
</gene>
<comment type="similarity">
    <text evidence="1">Belongs to the UPF0473 family.</text>
</comment>
<sequence>MAQEEKERFVIPDENGTEHLFDELFRFTVDETEKSYMVLVPVGEEEDDEEEVEVFAFRYEEQQNEDNDISFYPVETDEEWDMIEEMLNTFSEEEE</sequence>
<organism>
    <name type="scientific">Shouchella clausii (strain KSM-K16)</name>
    <name type="common">Alkalihalobacillus clausii</name>
    <dbReference type="NCBI Taxonomy" id="66692"/>
    <lineage>
        <taxon>Bacteria</taxon>
        <taxon>Bacillati</taxon>
        <taxon>Bacillota</taxon>
        <taxon>Bacilli</taxon>
        <taxon>Bacillales</taxon>
        <taxon>Bacillaceae</taxon>
        <taxon>Shouchella</taxon>
    </lineage>
</organism>